<name>KCNH1_BOVIN</name>
<sequence length="987" mass="110918">MTMAGGRKGLVAPQNTFLENIVRRSNDTNFVLGNAQIVDWPIVYSNDGFCKLSGYHRAEVMQKSSTCSFMYGELTDKDTIEKVRQTFENYEMNSFEILMYKKNRTPVWFFVKIAPIRNEQDKVVLFLCTFSDITAFKQPIEDDSCKGWGKFARLTRALTSSRGVLQQLAPSVQKGENVHKHSRLAEVLQLGSDILPQYKQEAPKTPPHIILHYCVFKTTWDWIILILTFYTAILVPYNVSFKTRQNNVAWLVVDSIVDVIFLVDIVLNFHTTFVGPAGEVISDPKLIRMNYLKTWFVIDLLSCLPYDVINAFENVDEVSAFMGDPGKIGFADQIPPPLEGRESQGISSLFSSLKVVRLLRLGRVARKLDHYIEYGAAVLVLLVCVFGLAAHWMACIWYSIGDYEIFDEDTKTIRNNSWLYQLAMDIGTPYQFNGSGSGKWEGGPSKNSVYISSLYFTMTSLTSVGFGNIAPSTDIEKIFAVAIMMIGSLLYATIFGNVTTIFQQMYANTNRYHEMLNSVRDFLKLYQVPKGLSERVMDYIVSTWSMSRGIDTEKVLQICPKDMRADICVHLNRKVFKEHPAFRLASDGCLRALAMEFQTVHCAPGDLIYHAGESVDSLCFVVSGSLEVIQDDEVVAILGKGDVFGDVFWKEATLAQSCANVRALTYCDLHVIKRDALQKVLEFYTAFSHSFSRNLILTYNLRKRIVFRKISDVKREEEERMKRKNEAPLILPPDHPVRRLFQRFRQQKEARLAAERGGRDLDDLDVEKGSVLTEHSHHGLAKASVVTVRESPATPVAFPAAAAPAGLDHARLQAPGAEGLGPKAGGADCAKRKGWARFKDACGQAEDWSKVSKAESMETLPERTKAAGEATLKKTDSCDSGITKSDLRLDNVGEARSPQDRSPILAEVKHSFYPIPEQTLQAAVLEVKHELKEDIKALSTKMTSIEKQLSEILRILTSRRSSQSPQELFEISRPQSPESERDIFGAS</sequence>
<organism>
    <name type="scientific">Bos taurus</name>
    <name type="common">Bovine</name>
    <dbReference type="NCBI Taxonomy" id="9913"/>
    <lineage>
        <taxon>Eukaryota</taxon>
        <taxon>Metazoa</taxon>
        <taxon>Chordata</taxon>
        <taxon>Craniata</taxon>
        <taxon>Vertebrata</taxon>
        <taxon>Euteleostomi</taxon>
        <taxon>Mammalia</taxon>
        <taxon>Eutheria</taxon>
        <taxon>Laurasiatheria</taxon>
        <taxon>Artiodactyla</taxon>
        <taxon>Ruminantia</taxon>
        <taxon>Pecora</taxon>
        <taxon>Bovidae</taxon>
        <taxon>Bovinae</taxon>
        <taxon>Bos</taxon>
    </lineage>
</organism>
<reference key="1">
    <citation type="journal article" date="1998" name="J. Gen. Physiol.">
        <title>Characterization of ether-a-go-go channels present in photoreceptors reveals similarity to IKx, a K current in rod inner segments.</title>
        <authorList>
            <person name="Frings S."/>
            <person name="Bruell N."/>
            <person name="Dzeja C."/>
            <person name="Angele A."/>
            <person name="Hagen V."/>
            <person name="Kaupp U.B."/>
            <person name="Baumann A."/>
        </authorList>
    </citation>
    <scope>NUCLEOTIDE SEQUENCE [MRNA] (ISOFORMS 1 AND 2)</scope>
    <scope>FUNCTION</scope>
    <scope>TRANSPORTER ACTIVITY</scope>
    <scope>ACTIVITY REGULATION</scope>
    <scope>LACK OF REGULATION BY CYCLIC NUCLEOTIDES</scope>
    <scope>SUBCELLULAR LOCATION</scope>
    <scope>TISSUE SPECIFICITY</scope>
    <source>
        <tissue>Retina</tissue>
    </source>
</reference>
<feature type="chain" id="PRO_0000053993" description="Voltage-gated delayed rectifier potassium channel KCNH1">
    <location>
        <begin position="1"/>
        <end position="987"/>
    </location>
</feature>
<feature type="topological domain" description="Cytoplasmic" evidence="3">
    <location>
        <begin position="1"/>
        <end position="220"/>
    </location>
</feature>
<feature type="transmembrane region" description="Helical; Name=Segment S1" evidence="3">
    <location>
        <begin position="221"/>
        <end position="241"/>
    </location>
</feature>
<feature type="topological domain" description="Extracellular" evidence="3">
    <location>
        <begin position="242"/>
        <end position="248"/>
    </location>
</feature>
<feature type="transmembrane region" description="Helical; Name=Segment S2" evidence="3">
    <location>
        <begin position="249"/>
        <end position="269"/>
    </location>
</feature>
<feature type="topological domain" description="Cytoplasmic" evidence="3">
    <location>
        <begin position="270"/>
        <end position="290"/>
    </location>
</feature>
<feature type="transmembrane region" description="Helical; Name=Segment S3" evidence="3">
    <location>
        <begin position="291"/>
        <end position="309"/>
    </location>
</feature>
<feature type="topological domain" description="Extracellular" evidence="3">
    <location>
        <begin position="310"/>
        <end position="345"/>
    </location>
</feature>
<feature type="transmembrane region" description="Helical; Voltage-sensor; Name=Segment S4" evidence="3">
    <location>
        <begin position="346"/>
        <end position="368"/>
    </location>
</feature>
<feature type="topological domain" description="Cytoplasmic" evidence="3">
    <location>
        <begin position="369"/>
        <end position="377"/>
    </location>
</feature>
<feature type="transmembrane region" description="Helical; Name=Segment S5" evidence="3">
    <location>
        <begin position="378"/>
        <end position="399"/>
    </location>
</feature>
<feature type="topological domain" description="Extracellular" evidence="3">
    <location>
        <begin position="400"/>
        <end position="448"/>
    </location>
</feature>
<feature type="intramembrane region" description="Pore-forming; Name=Segment H5" evidence="3">
    <location>
        <begin position="449"/>
        <end position="470"/>
    </location>
</feature>
<feature type="topological domain" description="Extracellular" evidence="3">
    <location>
        <begin position="471"/>
        <end position="477"/>
    </location>
</feature>
<feature type="transmembrane region" description="Helical; Name=Segment S6" evidence="3">
    <location>
        <begin position="478"/>
        <end position="498"/>
    </location>
</feature>
<feature type="topological domain" description="Cytoplasmic" evidence="3">
    <location>
        <begin position="499"/>
        <end position="987"/>
    </location>
</feature>
<feature type="domain" description="PAS" evidence="5">
    <location>
        <begin position="14"/>
        <end position="94"/>
    </location>
</feature>
<feature type="domain" description="PAC" evidence="6">
    <location>
        <begin position="93"/>
        <end position="145"/>
    </location>
</feature>
<feature type="region of interest" description="Required for phosphatidylinositol bisphosphate binding" evidence="1">
    <location>
        <begin position="151"/>
        <end position="162"/>
    </location>
</feature>
<feature type="region of interest" description="Calmodulin-binding" evidence="2">
    <location>
        <begin position="673"/>
        <end position="770"/>
    </location>
</feature>
<feature type="region of interest" description="Interaction with cyclic nucleotide-binding pocket" evidence="2">
    <location>
        <begin position="699"/>
        <end position="701"/>
    </location>
</feature>
<feature type="region of interest" description="CAD (involved in subunit assembly)" evidence="3">
    <location>
        <begin position="922"/>
        <end position="962"/>
    </location>
</feature>
<feature type="region of interest" description="Disordered" evidence="7">
    <location>
        <begin position="960"/>
        <end position="987"/>
    </location>
</feature>
<feature type="short sequence motif" description="Selectivity filter" evidence="3">
    <location>
        <begin position="463"/>
        <end position="468"/>
    </location>
</feature>
<feature type="compositionally biased region" description="Basic and acidic residues" evidence="7">
    <location>
        <begin position="978"/>
        <end position="987"/>
    </location>
</feature>
<feature type="modified residue" description="Phosphoserine" evidence="2">
    <location>
        <position position="972"/>
    </location>
</feature>
<feature type="modified residue" description="Phosphoserine" evidence="2">
    <location>
        <position position="976"/>
    </location>
</feature>
<feature type="modified residue" description="Phosphoserine" evidence="2">
    <location>
        <position position="979"/>
    </location>
</feature>
<feature type="glycosylation site" description="N-linked (GlcNAc...) asparagine" evidence="4">
    <location>
        <position position="415"/>
    </location>
</feature>
<feature type="glycosylation site" description="N-linked (GlcNAc...) asparagine" evidence="4">
    <location>
        <position position="433"/>
    </location>
</feature>
<feature type="splice variant" id="VSP_000963" description="In isoform 1." evidence="9">
    <location>
        <begin position="318"/>
        <end position="344"/>
    </location>
</feature>
<comment type="function">
    <text evidence="1 8">Pore-forming (alpha) subunit of a voltage-gated delayed rectifier potassium channel that mediates outward-rectifying potassium currents which, on depolarization, reaches a steady-state level and do not inactivate (PubMed:9524140). The activation kinetics depend on the prepulse potential and external divalent cation concentration. With negative prepulses, the current activation is delayed and slowed down several fold, whereas more positive prepulses speed up activation. The time course of activation is biphasic with a fast and a slowly activating current component. Activates at more positive membrane potentials and exhibit a steeper activation curve (By similarity). Channel properties are modulated by subunit assembly. Mediates IK(NI) current in myoblasts. Involved in the regulation of cell proliferation and differentiation, in particular adipogenic and osteogenic differentiation in bone marrow-derived mesenchymal stem cells (MSCs) (By similarity).</text>
</comment>
<comment type="catalytic activity">
    <reaction evidence="8">
        <text>K(+)(in) = K(+)(out)</text>
        <dbReference type="Rhea" id="RHEA:29463"/>
        <dbReference type="ChEBI" id="CHEBI:29103"/>
    </reaction>
</comment>
<comment type="activity regulation">
    <text evidence="1 2 8">Channel activity is inhibited by interaction with Ca(2+)-bound calmodulin. Interaction of a single pore-forming alpha subunit with a calmodulin chain is sufficient to promote channel closure (By similarity). Extracellular magnesium ion concentrations up to 4 mM modulate channel activity by slowing down current activation in a reversible fashion. Channel activity is not regulated by cyclic nucleotides (PubMed:9524140). Channel activity is inhibited by binding intracellular phosphatidylinositol-3,5-bisphosphate and phosphatidylinositol-4,5-bisphosphate (PIP2), but is not inhibited by phosphatidylinositol 4-phosphate (By similarity).</text>
</comment>
<comment type="subunit">
    <text evidence="1">Homomultimer (By similarity). The potassium channel is composed of a homo- or heterotetrameric complex of pore-forming alpha subunits that can associate with modulating beta subunits. Heteromultimer with KCNH5/EAG2 (By similarity). Interacts with ALG10B (By similarity). Interacts with RABEP1 (By similarity). Interacts (via C-terminus) with CTTN. Interacts (via C-terminal cytoplasmic region) with Ca(2+)-bound calmodulin (By similarity).</text>
</comment>
<comment type="subcellular location">
    <subcellularLocation>
        <location evidence="8">Cell membrane</location>
        <topology evidence="1">Multi-pass membrane protein</topology>
    </subcellularLocation>
    <subcellularLocation>
        <location evidence="1">Nucleus inner membrane</location>
        <topology evidence="1">Multi-pass membrane protein</topology>
    </subcellularLocation>
    <subcellularLocation>
        <location evidence="3">Cell projection</location>
        <location evidence="3">Dendrite</location>
    </subcellularLocation>
    <subcellularLocation>
        <location evidence="3">Cell projection</location>
        <location evidence="3">Axon</location>
    </subcellularLocation>
    <subcellularLocation>
        <location evidence="3">Presynaptic cell membrane</location>
    </subcellularLocation>
    <subcellularLocation>
        <location evidence="3">Perikaryon</location>
    </subcellularLocation>
    <subcellularLocation>
        <location evidence="3">Postsynaptic density membrane</location>
    </subcellularLocation>
    <subcellularLocation>
        <location evidence="1">Early endosome membrane</location>
    </subcellularLocation>
    <text evidence="1">Perinuclear KCNH1 is located to NPC-free islands.</text>
</comment>
<comment type="alternative products">
    <event type="alternative splicing"/>
    <isoform>
        <id>O18965-1</id>
        <name>2</name>
        <name>EAG2</name>
        <sequence type="displayed"/>
    </isoform>
    <isoform>
        <id>O18965-2</id>
        <name>1</name>
        <name>EAG1</name>
        <sequence type="described" ref="VSP_000963"/>
    </isoform>
</comment>
<comment type="tissue specificity">
    <text evidence="8">Detected in cerebellum, cortex and retina.</text>
</comment>
<comment type="domain">
    <text evidence="3">The segment S4 is probably the voltage-sensor and is characterized by a series of positively charged amino acids at every third position. Conformational changes of voltage-sensor are driven by an electric field generated by a potassium gradient across the membrane.</text>
</comment>
<comment type="domain">
    <text evidence="2">The C-terminal region interacts with the cyclic nucleotide-binding domain and contributes to regulate channel gating.</text>
</comment>
<comment type="domain">
    <text evidence="3">The PAS and PAC domain interact with the cyclic nucleotide-binding domain and contribute to the regulation of channel gating. Calmodulin binding clamps together the PAS and PAC domain with the cyclic nucleotide-binding domain from a neighboring subunit and causes a conformation change that leads to channel closure.</text>
</comment>
<comment type="domain">
    <text evidence="2">The cyclic nucleotide-binding domain lacks residues that are essential for nucleotide-binding and cannot bind cyclic nucleotides. Instead, residues from the C-terminal domain (the so-called intrinsic ligand) bind in the cavity that would be expected to bind cyclic nucleotides. Interaction with the C-terminal region hinders interaction with CALM and reduces the affinity for CALM.</text>
</comment>
<comment type="domain">
    <text evidence="3">The PAS and the cyclic nucleotide-binding domain (CNBHD) interact with the transmembrane voltage sensors (VS) that modulate voltage-dependent gating and provide evidence that VS movement destabilizes these interactions to promote channel opening.</text>
</comment>
<comment type="PTM">
    <text evidence="1">Channel activity is regulated via tyrosine phosphorylation/dephosphorylation by SRC and PTPN6.</text>
</comment>
<comment type="similarity">
    <text evidence="10">Belongs to the potassium channel family. H (Eag) (TC 1.A.1.20) subfamily. Kv10.1/KCNH1 sub-subfamily.</text>
</comment>
<evidence type="ECO:0000250" key="1">
    <source>
        <dbReference type="UniProtKB" id="O95259"/>
    </source>
</evidence>
<evidence type="ECO:0000250" key="2">
    <source>
        <dbReference type="UniProtKB" id="Q60603"/>
    </source>
</evidence>
<evidence type="ECO:0000250" key="3">
    <source>
        <dbReference type="UniProtKB" id="Q63472"/>
    </source>
</evidence>
<evidence type="ECO:0000255" key="4"/>
<evidence type="ECO:0000255" key="5">
    <source>
        <dbReference type="PROSITE-ProRule" id="PRU00140"/>
    </source>
</evidence>
<evidence type="ECO:0000255" key="6">
    <source>
        <dbReference type="PROSITE-ProRule" id="PRU00141"/>
    </source>
</evidence>
<evidence type="ECO:0000256" key="7">
    <source>
        <dbReference type="SAM" id="MobiDB-lite"/>
    </source>
</evidence>
<evidence type="ECO:0000269" key="8">
    <source>
    </source>
</evidence>
<evidence type="ECO:0000303" key="9">
    <source>
    </source>
</evidence>
<evidence type="ECO:0000305" key="10"/>
<keyword id="KW-0025">Alternative splicing</keyword>
<keyword id="KW-0112">Calmodulin-binding</keyword>
<keyword id="KW-1003">Cell membrane</keyword>
<keyword id="KW-0966">Cell projection</keyword>
<keyword id="KW-0967">Endosome</keyword>
<keyword id="KW-0325">Glycoprotein</keyword>
<keyword id="KW-0407">Ion channel</keyword>
<keyword id="KW-0406">Ion transport</keyword>
<keyword id="KW-0446">Lipid-binding</keyword>
<keyword id="KW-0472">Membrane</keyword>
<keyword id="KW-0539">Nucleus</keyword>
<keyword id="KW-0597">Phosphoprotein</keyword>
<keyword id="KW-0628">Postsynaptic cell membrane</keyword>
<keyword id="KW-0630">Potassium</keyword>
<keyword id="KW-0631">Potassium channel</keyword>
<keyword id="KW-0633">Potassium transport</keyword>
<keyword id="KW-1185">Reference proteome</keyword>
<keyword id="KW-0770">Synapse</keyword>
<keyword id="KW-0812">Transmembrane</keyword>
<keyword id="KW-1133">Transmembrane helix</keyword>
<keyword id="KW-0813">Transport</keyword>
<keyword id="KW-0851">Voltage-gated channel</keyword>
<proteinExistence type="evidence at transcript level"/>
<gene>
    <name evidence="1" type="primary">KCNH1</name>
    <name evidence="9" type="synonym">EAG1</name>
</gene>
<protein>
    <recommendedName>
        <fullName evidence="1">Voltage-gated delayed rectifier potassium channel KCNH1</fullName>
    </recommendedName>
    <alternativeName>
        <fullName evidence="1">Ether-a-go-go potassium channel 1</fullName>
        <shortName evidence="1">EAG channel 1</shortName>
        <shortName evidence="9">bEAG1</shortName>
    </alternativeName>
    <alternativeName>
        <fullName evidence="1">Potassium voltage-gated channel subfamily H member 1</fullName>
    </alternativeName>
    <alternativeName>
        <fullName evidence="1">Voltage-gated potassium channel subunit Kv10.1</fullName>
    </alternativeName>
</protein>
<dbReference type="EMBL" id="Y13430">
    <property type="protein sequence ID" value="CAA73842.1"/>
    <property type="molecule type" value="mRNA"/>
</dbReference>
<dbReference type="EMBL" id="Y13431">
    <property type="protein sequence ID" value="CAA73843.1"/>
    <property type="molecule type" value="mRNA"/>
</dbReference>
<dbReference type="RefSeq" id="NP_776797.1">
    <molecule id="O18965-1"/>
    <property type="nucleotide sequence ID" value="NM_174372.2"/>
</dbReference>
<dbReference type="RefSeq" id="XP_024831798.1">
    <molecule id="O18965-2"/>
    <property type="nucleotide sequence ID" value="XM_024976030.2"/>
</dbReference>
<dbReference type="SMR" id="O18965"/>
<dbReference type="FunCoup" id="O18965">
    <property type="interactions" value="752"/>
</dbReference>
<dbReference type="STRING" id="9913.ENSBTAP00000011477"/>
<dbReference type="GlyCosmos" id="O18965">
    <property type="glycosylation" value="2 sites, No reported glycans"/>
</dbReference>
<dbReference type="GlyGen" id="O18965">
    <property type="glycosylation" value="2 sites"/>
</dbReference>
<dbReference type="PaxDb" id="9913-ENSBTAP00000011477"/>
<dbReference type="Ensembl" id="ENSBTAT00000011477.6">
    <molecule id="O18965-1"/>
    <property type="protein sequence ID" value="ENSBTAP00000011477.6"/>
    <property type="gene ID" value="ENSBTAG00000008710.7"/>
</dbReference>
<dbReference type="GeneID" id="281881"/>
<dbReference type="KEGG" id="bta:281881"/>
<dbReference type="CTD" id="3756"/>
<dbReference type="VEuPathDB" id="HostDB:ENSBTAG00000008710"/>
<dbReference type="eggNOG" id="KOG0501">
    <property type="taxonomic scope" value="Eukaryota"/>
</dbReference>
<dbReference type="GeneTree" id="ENSGT00940000155793"/>
<dbReference type="InParanoid" id="O18965"/>
<dbReference type="OMA" id="HEMISNV"/>
<dbReference type="OrthoDB" id="447251at2759"/>
<dbReference type="Reactome" id="R-BTA-1296072">
    <property type="pathway name" value="Voltage gated Potassium channels"/>
</dbReference>
<dbReference type="Proteomes" id="UP000009136">
    <property type="component" value="Chromosome 16"/>
</dbReference>
<dbReference type="Bgee" id="ENSBTAG00000008710">
    <property type="expression patterns" value="Expressed in oocyte and 32 other cell types or tissues"/>
</dbReference>
<dbReference type="GO" id="GO:0030424">
    <property type="term" value="C:axon"/>
    <property type="evidence" value="ECO:0007669"/>
    <property type="project" value="UniProtKB-SubCell"/>
</dbReference>
<dbReference type="GO" id="GO:0030425">
    <property type="term" value="C:dendrite"/>
    <property type="evidence" value="ECO:0007669"/>
    <property type="project" value="UniProtKB-SubCell"/>
</dbReference>
<dbReference type="GO" id="GO:0031901">
    <property type="term" value="C:early endosome membrane"/>
    <property type="evidence" value="ECO:0000250"/>
    <property type="project" value="UniProtKB"/>
</dbReference>
<dbReference type="GO" id="GO:0005637">
    <property type="term" value="C:nuclear inner membrane"/>
    <property type="evidence" value="ECO:0007669"/>
    <property type="project" value="UniProtKB-SubCell"/>
</dbReference>
<dbReference type="GO" id="GO:0043204">
    <property type="term" value="C:perikaryon"/>
    <property type="evidence" value="ECO:0007669"/>
    <property type="project" value="UniProtKB-SubCell"/>
</dbReference>
<dbReference type="GO" id="GO:0005886">
    <property type="term" value="C:plasma membrane"/>
    <property type="evidence" value="ECO:0000315"/>
    <property type="project" value="UniProtKB"/>
</dbReference>
<dbReference type="GO" id="GO:0098839">
    <property type="term" value="C:postsynaptic density membrane"/>
    <property type="evidence" value="ECO:0007669"/>
    <property type="project" value="UniProtKB-SubCell"/>
</dbReference>
<dbReference type="GO" id="GO:0042734">
    <property type="term" value="C:presynaptic membrane"/>
    <property type="evidence" value="ECO:0007669"/>
    <property type="project" value="UniProtKB-SubCell"/>
</dbReference>
<dbReference type="GO" id="GO:0008076">
    <property type="term" value="C:voltage-gated potassium channel complex"/>
    <property type="evidence" value="ECO:0000250"/>
    <property type="project" value="UniProtKB"/>
</dbReference>
<dbReference type="GO" id="GO:0005516">
    <property type="term" value="F:calmodulin binding"/>
    <property type="evidence" value="ECO:0007669"/>
    <property type="project" value="UniProtKB-KW"/>
</dbReference>
<dbReference type="GO" id="GO:0005251">
    <property type="term" value="F:delayed rectifier potassium channel activity"/>
    <property type="evidence" value="ECO:0000250"/>
    <property type="project" value="UniProtKB"/>
</dbReference>
<dbReference type="GO" id="GO:1902936">
    <property type="term" value="F:phosphatidylinositol bisphosphate binding"/>
    <property type="evidence" value="ECO:0000250"/>
    <property type="project" value="UniProtKB"/>
</dbReference>
<dbReference type="GO" id="GO:0005249">
    <property type="term" value="F:voltage-gated potassium channel activity"/>
    <property type="evidence" value="ECO:0000314"/>
    <property type="project" value="UniProtKB"/>
</dbReference>
<dbReference type="GO" id="GO:0071277">
    <property type="term" value="P:cellular response to calcium ion"/>
    <property type="evidence" value="ECO:0000250"/>
    <property type="project" value="UniProtKB"/>
</dbReference>
<dbReference type="GO" id="GO:0071805">
    <property type="term" value="P:potassium ion transmembrane transport"/>
    <property type="evidence" value="ECO:0000315"/>
    <property type="project" value="UniProtKB"/>
</dbReference>
<dbReference type="GO" id="GO:0042127">
    <property type="term" value="P:regulation of cell population proliferation"/>
    <property type="evidence" value="ECO:0000250"/>
    <property type="project" value="UniProtKB"/>
</dbReference>
<dbReference type="GO" id="GO:0042391">
    <property type="term" value="P:regulation of membrane potential"/>
    <property type="evidence" value="ECO:0000318"/>
    <property type="project" value="GO_Central"/>
</dbReference>
<dbReference type="CDD" id="cd00038">
    <property type="entry name" value="CAP_ED"/>
    <property type="match status" value="1"/>
</dbReference>
<dbReference type="CDD" id="cd00130">
    <property type="entry name" value="PAS"/>
    <property type="match status" value="1"/>
</dbReference>
<dbReference type="FunFam" id="1.10.1200.260:FF:000003">
    <property type="entry name" value="Potassium voltage-gated channel subfamily H member 1"/>
    <property type="match status" value="1"/>
</dbReference>
<dbReference type="FunFam" id="2.60.120.10:FF:000009">
    <property type="entry name" value="Potassium voltage-gated channel subfamily H member 1"/>
    <property type="match status" value="1"/>
</dbReference>
<dbReference type="FunFam" id="3.30.450.20:FF:000009">
    <property type="entry name" value="Potassium voltage-gated channel subfamily H member 1"/>
    <property type="match status" value="1"/>
</dbReference>
<dbReference type="FunFam" id="1.10.287.70:FF:000035">
    <property type="entry name" value="Potassium voltage-gated channel, subfamily H (Eag-related), member 1"/>
    <property type="match status" value="1"/>
</dbReference>
<dbReference type="Gene3D" id="1.10.1200.260">
    <property type="match status" value="1"/>
</dbReference>
<dbReference type="Gene3D" id="1.10.287.70">
    <property type="match status" value="1"/>
</dbReference>
<dbReference type="Gene3D" id="2.60.120.10">
    <property type="entry name" value="Jelly Rolls"/>
    <property type="match status" value="1"/>
</dbReference>
<dbReference type="Gene3D" id="3.30.450.20">
    <property type="entry name" value="PAS domain"/>
    <property type="match status" value="1"/>
</dbReference>
<dbReference type="InterPro" id="IPR000595">
    <property type="entry name" value="cNMP-bd_dom"/>
</dbReference>
<dbReference type="InterPro" id="IPR018490">
    <property type="entry name" value="cNMP-bd_dom_sf"/>
</dbReference>
<dbReference type="InterPro" id="IPR005821">
    <property type="entry name" value="Ion_trans_dom"/>
</dbReference>
<dbReference type="InterPro" id="IPR003949">
    <property type="entry name" value="K_chnl_volt-dep_EAG"/>
</dbReference>
<dbReference type="InterPro" id="IPR003938">
    <property type="entry name" value="K_chnl_volt-dep_EAG/ELK/ERG"/>
</dbReference>
<dbReference type="InterPro" id="IPR050818">
    <property type="entry name" value="KCNH_animal-type"/>
</dbReference>
<dbReference type="InterPro" id="IPR001610">
    <property type="entry name" value="PAC"/>
</dbReference>
<dbReference type="InterPro" id="IPR000014">
    <property type="entry name" value="PAS"/>
</dbReference>
<dbReference type="InterPro" id="IPR000700">
    <property type="entry name" value="PAS-assoc_C"/>
</dbReference>
<dbReference type="InterPro" id="IPR035965">
    <property type="entry name" value="PAS-like_dom_sf"/>
</dbReference>
<dbReference type="InterPro" id="IPR014710">
    <property type="entry name" value="RmlC-like_jellyroll"/>
</dbReference>
<dbReference type="NCBIfam" id="TIGR00229">
    <property type="entry name" value="sensory_box"/>
    <property type="match status" value="1"/>
</dbReference>
<dbReference type="PANTHER" id="PTHR10217:SF530">
    <property type="entry name" value="POTASSIUM VOLTAGE-GATED CHANNEL SUBFAMILY H MEMBER 1"/>
    <property type="match status" value="1"/>
</dbReference>
<dbReference type="PANTHER" id="PTHR10217">
    <property type="entry name" value="VOLTAGE AND LIGAND GATED POTASSIUM CHANNEL"/>
    <property type="match status" value="1"/>
</dbReference>
<dbReference type="Pfam" id="PF00027">
    <property type="entry name" value="cNMP_binding"/>
    <property type="match status" value="1"/>
</dbReference>
<dbReference type="Pfam" id="PF00520">
    <property type="entry name" value="Ion_trans"/>
    <property type="match status" value="1"/>
</dbReference>
<dbReference type="Pfam" id="PF13426">
    <property type="entry name" value="PAS_9"/>
    <property type="match status" value="1"/>
</dbReference>
<dbReference type="PRINTS" id="PR01463">
    <property type="entry name" value="EAGCHANLFMLY"/>
</dbReference>
<dbReference type="PRINTS" id="PR01464">
    <property type="entry name" value="EAGCHANNEL"/>
</dbReference>
<dbReference type="SMART" id="SM00100">
    <property type="entry name" value="cNMP"/>
    <property type="match status" value="1"/>
</dbReference>
<dbReference type="SMART" id="SM00086">
    <property type="entry name" value="PAC"/>
    <property type="match status" value="1"/>
</dbReference>
<dbReference type="SUPFAM" id="SSF51206">
    <property type="entry name" value="cAMP-binding domain-like"/>
    <property type="match status" value="1"/>
</dbReference>
<dbReference type="SUPFAM" id="SSF55785">
    <property type="entry name" value="PYP-like sensor domain (PAS domain)"/>
    <property type="match status" value="1"/>
</dbReference>
<dbReference type="SUPFAM" id="SSF81324">
    <property type="entry name" value="Voltage-gated potassium channels"/>
    <property type="match status" value="1"/>
</dbReference>
<dbReference type="PROSITE" id="PS50042">
    <property type="entry name" value="CNMP_BINDING_3"/>
    <property type="match status" value="1"/>
</dbReference>
<dbReference type="PROSITE" id="PS50113">
    <property type="entry name" value="PAC"/>
    <property type="match status" value="1"/>
</dbReference>
<dbReference type="PROSITE" id="PS50112">
    <property type="entry name" value="PAS"/>
    <property type="match status" value="1"/>
</dbReference>
<accession>O18965</accession>
<accession>O18966</accession>